<sequence length="305" mass="33585">MSWLTEYVRPKIRTLLGRRDVPDNLWVQCPACQQMIFARDLEKNQRVCTHCDHHMRGTALERLKWTLDEGYTRIELPKAPQDPLRFRDSKRYTDRLRDAREKTHLDDAIVVAHGTIEGQKAVVAAMAFEFMGGSMGAAVGEGIVAAAQLAVLQKAPFIIFTASGGARMQEAAISLMQMPRTTIATRMVKEAGLPFIVVLTDPTTGGVTASFAMLGDIQIAEPKALIGFAGARVIEDTTREKLPEGFQRAEFLLEHGIVDMVVRRADMRATLSRVIALLTEGVTLPKVESVASLTEAKQPARTADA</sequence>
<keyword id="KW-0067">ATP-binding</keyword>
<keyword id="KW-0963">Cytoplasm</keyword>
<keyword id="KW-0275">Fatty acid biosynthesis</keyword>
<keyword id="KW-0276">Fatty acid metabolism</keyword>
<keyword id="KW-0444">Lipid biosynthesis</keyword>
<keyword id="KW-0443">Lipid metabolism</keyword>
<keyword id="KW-0479">Metal-binding</keyword>
<keyword id="KW-0547">Nucleotide-binding</keyword>
<keyword id="KW-1185">Reference proteome</keyword>
<keyword id="KW-0808">Transferase</keyword>
<keyword id="KW-0862">Zinc</keyword>
<keyword id="KW-0863">Zinc-finger</keyword>
<protein>
    <recommendedName>
        <fullName evidence="1">Acetyl-coenzyme A carboxylase carboxyl transferase subunit beta</fullName>
        <shortName evidence="1">ACCase subunit beta</shortName>
        <shortName evidence="1">Acetyl-CoA carboxylase carboxyltransferase subunit beta</shortName>
        <ecNumber evidence="1">2.1.3.15</ecNumber>
    </recommendedName>
</protein>
<reference key="1">
    <citation type="journal article" date="2007" name="J. Bacteriol.">
        <title>Genome sequence analysis of the emerging human pathogenic acetic acid bacterium Granulibacter bethesdensis.</title>
        <authorList>
            <person name="Greenberg D.E."/>
            <person name="Porcella S.F."/>
            <person name="Zelazny A.M."/>
            <person name="Virtaneva K."/>
            <person name="Sturdevant D.E."/>
            <person name="Kupko J.J. III"/>
            <person name="Barbian K.D."/>
            <person name="Babar A."/>
            <person name="Dorward D.W."/>
            <person name="Holland S.M."/>
        </authorList>
    </citation>
    <scope>NUCLEOTIDE SEQUENCE [LARGE SCALE GENOMIC DNA]</scope>
    <source>
        <strain>ATCC BAA-1260 / CGDNIH1</strain>
    </source>
</reference>
<gene>
    <name evidence="1" type="primary">accD</name>
    <name type="ordered locus">GbCGDNIH1_2013</name>
</gene>
<dbReference type="EC" id="2.1.3.15" evidence="1"/>
<dbReference type="EMBL" id="CP000394">
    <property type="protein sequence ID" value="ABI62911.1"/>
    <property type="molecule type" value="Genomic_DNA"/>
</dbReference>
<dbReference type="RefSeq" id="WP_011632713.1">
    <property type="nucleotide sequence ID" value="NC_008343.2"/>
</dbReference>
<dbReference type="SMR" id="Q0BQJ1"/>
<dbReference type="STRING" id="391165.GbCGDNIH1_2013"/>
<dbReference type="GeneID" id="69746201"/>
<dbReference type="KEGG" id="gbe:GbCGDNIH1_2013"/>
<dbReference type="eggNOG" id="COG0777">
    <property type="taxonomic scope" value="Bacteria"/>
</dbReference>
<dbReference type="HOGENOM" id="CLU_015486_1_0_5"/>
<dbReference type="OrthoDB" id="9772975at2"/>
<dbReference type="UniPathway" id="UPA00655">
    <property type="reaction ID" value="UER00711"/>
</dbReference>
<dbReference type="Proteomes" id="UP000001963">
    <property type="component" value="Chromosome"/>
</dbReference>
<dbReference type="GO" id="GO:0009329">
    <property type="term" value="C:acetate CoA-transferase complex"/>
    <property type="evidence" value="ECO:0007669"/>
    <property type="project" value="TreeGrafter"/>
</dbReference>
<dbReference type="GO" id="GO:0003989">
    <property type="term" value="F:acetyl-CoA carboxylase activity"/>
    <property type="evidence" value="ECO:0007669"/>
    <property type="project" value="InterPro"/>
</dbReference>
<dbReference type="GO" id="GO:0005524">
    <property type="term" value="F:ATP binding"/>
    <property type="evidence" value="ECO:0007669"/>
    <property type="project" value="UniProtKB-KW"/>
</dbReference>
<dbReference type="GO" id="GO:0016743">
    <property type="term" value="F:carboxyl- or carbamoyltransferase activity"/>
    <property type="evidence" value="ECO:0007669"/>
    <property type="project" value="UniProtKB-UniRule"/>
</dbReference>
<dbReference type="GO" id="GO:0008270">
    <property type="term" value="F:zinc ion binding"/>
    <property type="evidence" value="ECO:0007669"/>
    <property type="project" value="UniProtKB-UniRule"/>
</dbReference>
<dbReference type="GO" id="GO:0006633">
    <property type="term" value="P:fatty acid biosynthetic process"/>
    <property type="evidence" value="ECO:0007669"/>
    <property type="project" value="UniProtKB-KW"/>
</dbReference>
<dbReference type="GO" id="GO:2001295">
    <property type="term" value="P:malonyl-CoA biosynthetic process"/>
    <property type="evidence" value="ECO:0007669"/>
    <property type="project" value="UniProtKB-UniRule"/>
</dbReference>
<dbReference type="Gene3D" id="3.90.226.10">
    <property type="entry name" value="2-enoyl-CoA Hydratase, Chain A, domain 1"/>
    <property type="match status" value="1"/>
</dbReference>
<dbReference type="HAMAP" id="MF_01395">
    <property type="entry name" value="AcetylCoA_CT_beta"/>
    <property type="match status" value="1"/>
</dbReference>
<dbReference type="InterPro" id="IPR034733">
    <property type="entry name" value="AcCoA_carboxyl_beta"/>
</dbReference>
<dbReference type="InterPro" id="IPR000438">
    <property type="entry name" value="Acetyl_CoA_COase_Trfase_b_su"/>
</dbReference>
<dbReference type="InterPro" id="IPR029045">
    <property type="entry name" value="ClpP/crotonase-like_dom_sf"/>
</dbReference>
<dbReference type="InterPro" id="IPR011762">
    <property type="entry name" value="COA_CT_N"/>
</dbReference>
<dbReference type="InterPro" id="IPR041010">
    <property type="entry name" value="Znf-ACC"/>
</dbReference>
<dbReference type="NCBIfam" id="TIGR00515">
    <property type="entry name" value="accD"/>
    <property type="match status" value="1"/>
</dbReference>
<dbReference type="PANTHER" id="PTHR42995">
    <property type="entry name" value="ACETYL-COENZYME A CARBOXYLASE CARBOXYL TRANSFERASE SUBUNIT BETA, CHLOROPLASTIC"/>
    <property type="match status" value="1"/>
</dbReference>
<dbReference type="PANTHER" id="PTHR42995:SF5">
    <property type="entry name" value="ACETYL-COENZYME A CARBOXYLASE CARBOXYL TRANSFERASE SUBUNIT BETA, CHLOROPLASTIC"/>
    <property type="match status" value="1"/>
</dbReference>
<dbReference type="Pfam" id="PF01039">
    <property type="entry name" value="Carboxyl_trans"/>
    <property type="match status" value="1"/>
</dbReference>
<dbReference type="Pfam" id="PF17848">
    <property type="entry name" value="Zn_ribbon_ACC"/>
    <property type="match status" value="1"/>
</dbReference>
<dbReference type="PRINTS" id="PR01070">
    <property type="entry name" value="ACCCTRFRASEB"/>
</dbReference>
<dbReference type="SUPFAM" id="SSF52096">
    <property type="entry name" value="ClpP/crotonase"/>
    <property type="match status" value="1"/>
</dbReference>
<dbReference type="PROSITE" id="PS50980">
    <property type="entry name" value="COA_CT_NTER"/>
    <property type="match status" value="1"/>
</dbReference>
<comment type="function">
    <text evidence="1">Component of the acetyl coenzyme A carboxylase (ACC) complex. Biotin carboxylase (BC) catalyzes the carboxylation of biotin on its carrier protein (BCCP) and then the CO(2) group is transferred by the transcarboxylase to acetyl-CoA to form malonyl-CoA.</text>
</comment>
<comment type="catalytic activity">
    <reaction evidence="1">
        <text>N(6)-carboxybiotinyl-L-lysyl-[protein] + acetyl-CoA = N(6)-biotinyl-L-lysyl-[protein] + malonyl-CoA</text>
        <dbReference type="Rhea" id="RHEA:54728"/>
        <dbReference type="Rhea" id="RHEA-COMP:10505"/>
        <dbReference type="Rhea" id="RHEA-COMP:10506"/>
        <dbReference type="ChEBI" id="CHEBI:57288"/>
        <dbReference type="ChEBI" id="CHEBI:57384"/>
        <dbReference type="ChEBI" id="CHEBI:83144"/>
        <dbReference type="ChEBI" id="CHEBI:83145"/>
        <dbReference type="EC" id="2.1.3.15"/>
    </reaction>
</comment>
<comment type="cofactor">
    <cofactor evidence="1">
        <name>Zn(2+)</name>
        <dbReference type="ChEBI" id="CHEBI:29105"/>
    </cofactor>
    <text evidence="1">Binds 1 zinc ion per subunit.</text>
</comment>
<comment type="pathway">
    <text evidence="1">Lipid metabolism; malonyl-CoA biosynthesis; malonyl-CoA from acetyl-CoA: step 1/1.</text>
</comment>
<comment type="subunit">
    <text evidence="1">Acetyl-CoA carboxylase is a heterohexamer composed of biotin carboxyl carrier protein (AccB), biotin carboxylase (AccC) and two subunits each of ACCase subunit alpha (AccA) and ACCase subunit beta (AccD).</text>
</comment>
<comment type="subcellular location">
    <subcellularLocation>
        <location evidence="1">Cytoplasm</location>
    </subcellularLocation>
</comment>
<comment type="similarity">
    <text evidence="1">Belongs to the AccD/PCCB family.</text>
</comment>
<name>ACCD_GRABC</name>
<evidence type="ECO:0000255" key="1">
    <source>
        <dbReference type="HAMAP-Rule" id="MF_01395"/>
    </source>
</evidence>
<evidence type="ECO:0000255" key="2">
    <source>
        <dbReference type="PROSITE-ProRule" id="PRU01136"/>
    </source>
</evidence>
<feature type="chain" id="PRO_0000389752" description="Acetyl-coenzyme A carboxylase carboxyl transferase subunit beta">
    <location>
        <begin position="1"/>
        <end position="305"/>
    </location>
</feature>
<feature type="domain" description="CoA carboxyltransferase N-terminal" evidence="2">
    <location>
        <begin position="25"/>
        <end position="293"/>
    </location>
</feature>
<feature type="zinc finger region" description="C4-type" evidence="1">
    <location>
        <begin position="29"/>
        <end position="51"/>
    </location>
</feature>
<feature type="binding site" evidence="1">
    <location>
        <position position="29"/>
    </location>
    <ligand>
        <name>Zn(2+)</name>
        <dbReference type="ChEBI" id="CHEBI:29105"/>
    </ligand>
</feature>
<feature type="binding site" evidence="1">
    <location>
        <position position="32"/>
    </location>
    <ligand>
        <name>Zn(2+)</name>
        <dbReference type="ChEBI" id="CHEBI:29105"/>
    </ligand>
</feature>
<feature type="binding site" evidence="1">
    <location>
        <position position="48"/>
    </location>
    <ligand>
        <name>Zn(2+)</name>
        <dbReference type="ChEBI" id="CHEBI:29105"/>
    </ligand>
</feature>
<feature type="binding site" evidence="1">
    <location>
        <position position="51"/>
    </location>
    <ligand>
        <name>Zn(2+)</name>
        <dbReference type="ChEBI" id="CHEBI:29105"/>
    </ligand>
</feature>
<proteinExistence type="inferred from homology"/>
<accession>Q0BQJ1</accession>
<organism>
    <name type="scientific">Granulibacter bethesdensis (strain ATCC BAA-1260 / CGDNIH1)</name>
    <dbReference type="NCBI Taxonomy" id="391165"/>
    <lineage>
        <taxon>Bacteria</taxon>
        <taxon>Pseudomonadati</taxon>
        <taxon>Pseudomonadota</taxon>
        <taxon>Alphaproteobacteria</taxon>
        <taxon>Acetobacterales</taxon>
        <taxon>Acetobacteraceae</taxon>
        <taxon>Granulibacter</taxon>
    </lineage>
</organism>